<reference key="1">
    <citation type="journal article" date="2006" name="PLoS Biol.">
        <title>The genome of deep-sea vent chemolithoautotroph Thiomicrospira crunogena XCL-2.</title>
        <authorList>
            <person name="Scott K.M."/>
            <person name="Sievert S.M."/>
            <person name="Abril F.N."/>
            <person name="Ball L.A."/>
            <person name="Barrett C.J."/>
            <person name="Blake R.A."/>
            <person name="Boller A.J."/>
            <person name="Chain P.S.G."/>
            <person name="Clark J.A."/>
            <person name="Davis C.R."/>
            <person name="Detter C."/>
            <person name="Do K.F."/>
            <person name="Dobrinski K.P."/>
            <person name="Faza B.I."/>
            <person name="Fitzpatrick K.A."/>
            <person name="Freyermuth S.K."/>
            <person name="Harmer T.L."/>
            <person name="Hauser L.J."/>
            <person name="Huegler M."/>
            <person name="Kerfeld C.A."/>
            <person name="Klotz M.G."/>
            <person name="Kong W.W."/>
            <person name="Land M."/>
            <person name="Lapidus A."/>
            <person name="Larimer F.W."/>
            <person name="Longo D.L."/>
            <person name="Lucas S."/>
            <person name="Malfatti S.A."/>
            <person name="Massey S.E."/>
            <person name="Martin D.D."/>
            <person name="McCuddin Z."/>
            <person name="Meyer F."/>
            <person name="Moore J.L."/>
            <person name="Ocampo L.H. Jr."/>
            <person name="Paul J.H."/>
            <person name="Paulsen I.T."/>
            <person name="Reep D.K."/>
            <person name="Ren Q."/>
            <person name="Ross R.L."/>
            <person name="Sato P.Y."/>
            <person name="Thomas P."/>
            <person name="Tinkham L.E."/>
            <person name="Zeruth G.T."/>
        </authorList>
    </citation>
    <scope>NUCLEOTIDE SEQUENCE [LARGE SCALE GENOMIC DNA]</scope>
    <source>
        <strain>DSM 25203 / XCL-2</strain>
    </source>
</reference>
<feature type="chain" id="PRO_0000292719" description="tRNA 2-selenouridine synthase">
    <location>
        <begin position="1"/>
        <end position="361"/>
    </location>
</feature>
<feature type="domain" description="Rhodanese" evidence="1">
    <location>
        <begin position="12"/>
        <end position="135"/>
    </location>
</feature>
<feature type="active site" description="S-selanylcysteine intermediate" evidence="1">
    <location>
        <position position="95"/>
    </location>
</feature>
<name>SELU_HYDCU</name>
<organism>
    <name type="scientific">Hydrogenovibrio crunogenus (strain DSM 25203 / XCL-2)</name>
    <name type="common">Thiomicrospira crunogena</name>
    <dbReference type="NCBI Taxonomy" id="317025"/>
    <lineage>
        <taxon>Bacteria</taxon>
        <taxon>Pseudomonadati</taxon>
        <taxon>Pseudomonadota</taxon>
        <taxon>Gammaproteobacteria</taxon>
        <taxon>Thiotrichales</taxon>
        <taxon>Piscirickettsiaceae</taxon>
        <taxon>Hydrogenovibrio</taxon>
    </lineage>
</organism>
<sequence length="361" mass="41704">MVPQSDDFERIVLKNIPLIDVRAPVEFAQGAFEMAHNLPLMNDEERQTVGICYKQKGHDEAVKLGHRLVNDKVRLPRVSGWQSFMEKYPEAMLYCFRGGMRSKIAQQWLADNGCEIVRLKGGYKAFRRYLIDHLEIMPQRFSTEGIQTWALGGRTGCGKTRLLHTLDNAIDLEGLANHRGSAFGGHVAPQPTQINFENTLAMAVMRFYAQGHSSLVLEDESHCIGSVSVPKTFFDFFKGGRQVLLEAPLEERVSITREEYVEQAQAEYETTEDWTVFMRSAFGRIRKRLGGERYQRVLKKFDQACENQHRTQEFDAHDDWIRILLTEYYDPMYDYQMQKKQCKIDFSGNFDAVKDFLSQQS</sequence>
<dbReference type="EC" id="2.9.1.3" evidence="1"/>
<dbReference type="EMBL" id="CP000109">
    <property type="protein sequence ID" value="ABB41618.1"/>
    <property type="status" value="ALT_INIT"/>
    <property type="molecule type" value="Genomic_DNA"/>
</dbReference>
<dbReference type="SMR" id="Q31GV5"/>
<dbReference type="STRING" id="317025.Tcr_1023"/>
<dbReference type="KEGG" id="tcx:Tcr_1023"/>
<dbReference type="eggNOG" id="COG2603">
    <property type="taxonomic scope" value="Bacteria"/>
</dbReference>
<dbReference type="HOGENOM" id="CLU_043456_1_0_6"/>
<dbReference type="GO" id="GO:0016765">
    <property type="term" value="F:transferase activity, transferring alkyl or aryl (other than methyl) groups"/>
    <property type="evidence" value="ECO:0007669"/>
    <property type="project" value="UniProtKB-UniRule"/>
</dbReference>
<dbReference type="GO" id="GO:0043828">
    <property type="term" value="F:tRNA 2-selenouridine synthase activity"/>
    <property type="evidence" value="ECO:0007669"/>
    <property type="project" value="UniProtKB-EC"/>
</dbReference>
<dbReference type="GO" id="GO:0002098">
    <property type="term" value="P:tRNA wobble uridine modification"/>
    <property type="evidence" value="ECO:0007669"/>
    <property type="project" value="UniProtKB-UniRule"/>
</dbReference>
<dbReference type="Gene3D" id="3.40.250.10">
    <property type="entry name" value="Rhodanese-like domain"/>
    <property type="match status" value="1"/>
</dbReference>
<dbReference type="HAMAP" id="MF_01622">
    <property type="entry name" value="tRNA_sel_U_synth"/>
    <property type="match status" value="1"/>
</dbReference>
<dbReference type="InterPro" id="IPR001763">
    <property type="entry name" value="Rhodanese-like_dom"/>
</dbReference>
<dbReference type="InterPro" id="IPR036873">
    <property type="entry name" value="Rhodanese-like_dom_sf"/>
</dbReference>
<dbReference type="InterPro" id="IPR017582">
    <property type="entry name" value="SelU"/>
</dbReference>
<dbReference type="NCBIfam" id="NF008750">
    <property type="entry name" value="PRK11784.1-2"/>
    <property type="match status" value="1"/>
</dbReference>
<dbReference type="NCBIfam" id="NF008751">
    <property type="entry name" value="PRK11784.1-3"/>
    <property type="match status" value="1"/>
</dbReference>
<dbReference type="NCBIfam" id="TIGR03167">
    <property type="entry name" value="tRNA_sel_U_synt"/>
    <property type="match status" value="1"/>
</dbReference>
<dbReference type="PANTHER" id="PTHR30401">
    <property type="entry name" value="TRNA 2-SELENOURIDINE SYNTHASE"/>
    <property type="match status" value="1"/>
</dbReference>
<dbReference type="PANTHER" id="PTHR30401:SF0">
    <property type="entry name" value="TRNA 2-SELENOURIDINE SYNTHASE"/>
    <property type="match status" value="1"/>
</dbReference>
<dbReference type="Pfam" id="PF00581">
    <property type="entry name" value="Rhodanese"/>
    <property type="match status" value="1"/>
</dbReference>
<dbReference type="SMART" id="SM00450">
    <property type="entry name" value="RHOD"/>
    <property type="match status" value="1"/>
</dbReference>
<dbReference type="SUPFAM" id="SSF52821">
    <property type="entry name" value="Rhodanese/Cell cycle control phosphatase"/>
    <property type="match status" value="1"/>
</dbReference>
<dbReference type="PROSITE" id="PS50206">
    <property type="entry name" value="RHODANESE_3"/>
    <property type="match status" value="1"/>
</dbReference>
<comment type="function">
    <text evidence="1">Involved in the post-transcriptional modification of the uridine at the wobble position (U34) of tRNA(Lys), tRNA(Glu) and tRNA(Gln). Catalyzes the conversion of 2-thiouridine (S2U-RNA) to 2-selenouridine (Se2U-RNA). Acts in a two-step process involving geranylation of 2-thiouridine (S2U) to S-geranyl-2-thiouridine (geS2U) and subsequent selenation of the latter derivative to 2-selenouridine (Se2U) in the tRNA chain.</text>
</comment>
<comment type="catalytic activity">
    <reaction evidence="1">
        <text>5-methylaminomethyl-2-thiouridine(34) in tRNA + selenophosphate + (2E)-geranyl diphosphate + H2O + H(+) = 5-methylaminomethyl-2-selenouridine(34) in tRNA + (2E)-thiogeraniol + phosphate + diphosphate</text>
        <dbReference type="Rhea" id="RHEA:42716"/>
        <dbReference type="Rhea" id="RHEA-COMP:10195"/>
        <dbReference type="Rhea" id="RHEA-COMP:10196"/>
        <dbReference type="ChEBI" id="CHEBI:15377"/>
        <dbReference type="ChEBI" id="CHEBI:15378"/>
        <dbReference type="ChEBI" id="CHEBI:16144"/>
        <dbReference type="ChEBI" id="CHEBI:33019"/>
        <dbReference type="ChEBI" id="CHEBI:43474"/>
        <dbReference type="ChEBI" id="CHEBI:58057"/>
        <dbReference type="ChEBI" id="CHEBI:74455"/>
        <dbReference type="ChEBI" id="CHEBI:82743"/>
        <dbReference type="ChEBI" id="CHEBI:143703"/>
        <dbReference type="EC" id="2.9.1.3"/>
    </reaction>
    <physiologicalReaction direction="left-to-right" evidence="1">
        <dbReference type="Rhea" id="RHEA:42717"/>
    </physiologicalReaction>
</comment>
<comment type="catalytic activity">
    <reaction evidence="1">
        <text>5-methylaminomethyl-2-thiouridine(34) in tRNA + (2E)-geranyl diphosphate = 5-methylaminomethyl-S-(2E)-geranyl-thiouridine(34) in tRNA + diphosphate</text>
        <dbReference type="Rhea" id="RHEA:14085"/>
        <dbReference type="Rhea" id="RHEA-COMP:10195"/>
        <dbReference type="Rhea" id="RHEA-COMP:14654"/>
        <dbReference type="ChEBI" id="CHEBI:33019"/>
        <dbReference type="ChEBI" id="CHEBI:58057"/>
        <dbReference type="ChEBI" id="CHEBI:74455"/>
        <dbReference type="ChEBI" id="CHEBI:140632"/>
    </reaction>
    <physiologicalReaction direction="left-to-right" evidence="1">
        <dbReference type="Rhea" id="RHEA:14086"/>
    </physiologicalReaction>
</comment>
<comment type="catalytic activity">
    <reaction evidence="1">
        <text>5-methylaminomethyl-S-(2E)-geranyl-thiouridine(34) in tRNA + selenophosphate + H(+) = 5-methylaminomethyl-2-(Se-phospho)selenouridine(34) in tRNA + (2E)-thiogeraniol</text>
        <dbReference type="Rhea" id="RHEA:60172"/>
        <dbReference type="Rhea" id="RHEA-COMP:14654"/>
        <dbReference type="Rhea" id="RHEA-COMP:15523"/>
        <dbReference type="ChEBI" id="CHEBI:15378"/>
        <dbReference type="ChEBI" id="CHEBI:16144"/>
        <dbReference type="ChEBI" id="CHEBI:140632"/>
        <dbReference type="ChEBI" id="CHEBI:143702"/>
        <dbReference type="ChEBI" id="CHEBI:143703"/>
    </reaction>
    <physiologicalReaction direction="left-to-right" evidence="1">
        <dbReference type="Rhea" id="RHEA:60173"/>
    </physiologicalReaction>
</comment>
<comment type="catalytic activity">
    <reaction evidence="1">
        <text>5-methylaminomethyl-2-(Se-phospho)selenouridine(34) in tRNA + H2O = 5-methylaminomethyl-2-selenouridine(34) in tRNA + phosphate</text>
        <dbReference type="Rhea" id="RHEA:60176"/>
        <dbReference type="Rhea" id="RHEA-COMP:10196"/>
        <dbReference type="Rhea" id="RHEA-COMP:15523"/>
        <dbReference type="ChEBI" id="CHEBI:15377"/>
        <dbReference type="ChEBI" id="CHEBI:43474"/>
        <dbReference type="ChEBI" id="CHEBI:82743"/>
        <dbReference type="ChEBI" id="CHEBI:143702"/>
    </reaction>
    <physiologicalReaction direction="left-to-right" evidence="1">
        <dbReference type="Rhea" id="RHEA:60177"/>
    </physiologicalReaction>
</comment>
<comment type="subunit">
    <text evidence="1">Monomer.</text>
</comment>
<comment type="similarity">
    <text evidence="1">Belongs to the SelU family.</text>
</comment>
<comment type="sequence caution" evidence="2">
    <conflict type="erroneous initiation">
        <sequence resource="EMBL-CDS" id="ABB41618"/>
    </conflict>
</comment>
<gene>
    <name evidence="1" type="primary">selU</name>
    <name type="ordered locus">Tcr_1023</name>
</gene>
<keyword id="KW-0711">Selenium</keyword>
<keyword id="KW-0808">Transferase</keyword>
<accession>Q31GV5</accession>
<proteinExistence type="inferred from homology"/>
<evidence type="ECO:0000255" key="1">
    <source>
        <dbReference type="HAMAP-Rule" id="MF_01622"/>
    </source>
</evidence>
<evidence type="ECO:0000305" key="2"/>
<protein>
    <recommendedName>
        <fullName evidence="1">tRNA 2-selenouridine synthase</fullName>
        <ecNumber evidence="1">2.9.1.3</ecNumber>
    </recommendedName>
</protein>